<comment type="function">
    <text evidence="1 2 4">Catalyzes the transfer of a N-acetyl-glucosamine moiety to 1D-myo-inositol 3-phosphate to produce 1D-myo-inositol 2-acetamido-2-deoxy-glucopyranoside 3-phosphate in the mycothiol (MSH) biosynthesis pathway (By similarity). MSH and WhiB3 are probably part of a regulatory circuit that mediates gene expression upon acid stress (like that found in host macrophage phagosomes). MSH is one of the major redox buffers which protects bacteria against redox stressors and antibiotics; loss of MSH or ergothioneine (ERG, the other major redox buffer in this bacteria) leads to respiratory alterations and bioenergetic deficiencies that negatively impact virulence (By similarity). Note that is strain is avirulent (PubMed:18584054).</text>
</comment>
<comment type="catalytic activity">
    <reaction evidence="2">
        <text>1D-myo-inositol 3-phosphate + UDP-N-acetyl-alpha-D-glucosamine = 1D-myo-inositol 2-acetamido-2-deoxy-alpha-D-glucopyranoside 3-phosphate + UDP + H(+)</text>
        <dbReference type="Rhea" id="RHEA:26188"/>
        <dbReference type="ChEBI" id="CHEBI:15378"/>
        <dbReference type="ChEBI" id="CHEBI:57705"/>
        <dbReference type="ChEBI" id="CHEBI:58223"/>
        <dbReference type="ChEBI" id="CHEBI:58401"/>
        <dbReference type="ChEBI" id="CHEBI:58892"/>
        <dbReference type="EC" id="2.4.1.250"/>
    </reaction>
</comment>
<comment type="subunit">
    <text evidence="2">Homodimer.</text>
</comment>
<comment type="similarity">
    <text evidence="2">Belongs to the glycosyltransferase group 1 family. MshA subfamily.</text>
</comment>
<proteinExistence type="inferred from homology"/>
<dbReference type="EC" id="2.4.1.250" evidence="2"/>
<dbReference type="EMBL" id="CP000611">
    <property type="protein sequence ID" value="ABQ72214.1"/>
    <property type="molecule type" value="Genomic_DNA"/>
</dbReference>
<dbReference type="RefSeq" id="WP_003402367.1">
    <property type="nucleotide sequence ID" value="NZ_CP016972.1"/>
</dbReference>
<dbReference type="SMR" id="A5TZL4"/>
<dbReference type="CAZy" id="GT4">
    <property type="family name" value="Glycosyltransferase Family 4"/>
</dbReference>
<dbReference type="KEGG" id="mra:MRA_0493"/>
<dbReference type="eggNOG" id="COG0438">
    <property type="taxonomic scope" value="Bacteria"/>
</dbReference>
<dbReference type="HOGENOM" id="CLU_009583_2_3_11"/>
<dbReference type="Proteomes" id="UP000001988">
    <property type="component" value="Chromosome"/>
</dbReference>
<dbReference type="GO" id="GO:0008375">
    <property type="term" value="F:acetylglucosaminyltransferase activity"/>
    <property type="evidence" value="ECO:0007669"/>
    <property type="project" value="UniProtKB-UniRule"/>
</dbReference>
<dbReference type="GO" id="GO:0102710">
    <property type="term" value="F:D-inositol-3-phosphate glycosyltransferase activity"/>
    <property type="evidence" value="ECO:0007669"/>
    <property type="project" value="UniProtKB-EC"/>
</dbReference>
<dbReference type="GO" id="GO:0000287">
    <property type="term" value="F:magnesium ion binding"/>
    <property type="evidence" value="ECO:0007669"/>
    <property type="project" value="UniProtKB-UniRule"/>
</dbReference>
<dbReference type="GO" id="GO:0010125">
    <property type="term" value="P:mycothiol biosynthetic process"/>
    <property type="evidence" value="ECO:0007669"/>
    <property type="project" value="UniProtKB-UniRule"/>
</dbReference>
<dbReference type="CDD" id="cd03800">
    <property type="entry name" value="GT4_sucrose_synthase"/>
    <property type="match status" value="1"/>
</dbReference>
<dbReference type="FunFam" id="3.40.50.2000:FF:000265">
    <property type="entry name" value="D-inositol 3-phosphate glycosyltransferase"/>
    <property type="match status" value="1"/>
</dbReference>
<dbReference type="FunFam" id="3.40.50.2000:FF:000123">
    <property type="entry name" value="D-inositol-3-phosphate glycosyltransferase"/>
    <property type="match status" value="1"/>
</dbReference>
<dbReference type="Gene3D" id="3.40.50.2000">
    <property type="entry name" value="Glycogen Phosphorylase B"/>
    <property type="match status" value="2"/>
</dbReference>
<dbReference type="HAMAP" id="MF_01695">
    <property type="entry name" value="MshA"/>
    <property type="match status" value="1"/>
</dbReference>
<dbReference type="InterPro" id="IPR001296">
    <property type="entry name" value="Glyco_trans_1"/>
</dbReference>
<dbReference type="InterPro" id="IPR028098">
    <property type="entry name" value="Glyco_trans_4-like_N"/>
</dbReference>
<dbReference type="InterPro" id="IPR017814">
    <property type="entry name" value="Mycothiol_biosynthesis_MshA"/>
</dbReference>
<dbReference type="NCBIfam" id="TIGR03449">
    <property type="entry name" value="mycothiol_MshA"/>
    <property type="match status" value="1"/>
</dbReference>
<dbReference type="PANTHER" id="PTHR12526:SF510">
    <property type="entry name" value="D-INOSITOL 3-PHOSPHATE GLYCOSYLTRANSFERASE"/>
    <property type="match status" value="1"/>
</dbReference>
<dbReference type="PANTHER" id="PTHR12526">
    <property type="entry name" value="GLYCOSYLTRANSFERASE"/>
    <property type="match status" value="1"/>
</dbReference>
<dbReference type="Pfam" id="PF13579">
    <property type="entry name" value="Glyco_trans_4_4"/>
    <property type="match status" value="1"/>
</dbReference>
<dbReference type="Pfam" id="PF00534">
    <property type="entry name" value="Glycos_transf_1"/>
    <property type="match status" value="1"/>
</dbReference>
<dbReference type="SUPFAM" id="SSF53756">
    <property type="entry name" value="UDP-Glycosyltransferase/glycogen phosphorylase"/>
    <property type="match status" value="1"/>
</dbReference>
<name>MSHA_MYCTA</name>
<gene>
    <name evidence="2" type="primary">mshA</name>
    <name type="ordered locus">MRA_0493</name>
</gene>
<protein>
    <recommendedName>
        <fullName>D-inositol 3-phosphate glycosyltransferase</fullName>
        <ecNumber evidence="2">2.4.1.250</ecNumber>
    </recommendedName>
    <alternativeName>
        <fullName evidence="2">N-acetylglucosamine-inositol-phosphate N-acetylglucosaminyltransferase</fullName>
        <shortName evidence="2">GlcNAc-Ins-P N-acetylglucosaminyltransferase</shortName>
    </alternativeName>
</protein>
<accession>A5TZL4</accession>
<sequence>MAGVRHDDGSGLIAQRRPVRGEGATRSRGPSGPSNRNVSAADDPRRVALLAVHTSPLAQPGTGDAGGMNVYMLQSALHLARRGIEVEIFTRATASADPPVVRVAPGVLVRNVVAGPFEGLDKYDLPTQLCAFAAGVLRAEAVHEPGYYDIVHSHYWLSGQVGWLARDRWAVPLVHTAHTLAAVKNAALADGDGPEPPLRTVGEQQVVDEADRLIVNTDDEARQVISLHGADPARIDVVHPGVDLDVFRPGDRRAARAALGLPVDERVVAFVGRIQPLKAPDIVLRAAAKLPGVRIIVAGGPSGSGLASPDGLVRLADELGISARVTFLPPQSHTDLATLFRAADLVAVPSYSESFGLVAVEAQACGTPVVAAAVGGLPVAVRDGITGTLVSGHEVGQWADAIDHLLRLCAGPRGRVMSRAAARHAATFSWENTTDALLASYRRAIGEYNAERQRRGGEVISDLVAVGKPRHWTPRRGVGA</sequence>
<reference key="1">
    <citation type="journal article" date="2008" name="PLoS ONE">
        <title>Genetic basis of virulence attenuation revealed by comparative genomic analysis of Mycobacterium tuberculosis strain H37Ra versus H37Rv.</title>
        <authorList>
            <person name="Zheng H."/>
            <person name="Lu L."/>
            <person name="Wang B."/>
            <person name="Pu S."/>
            <person name="Zhang X."/>
            <person name="Zhu G."/>
            <person name="Shi W."/>
            <person name="Zhang L."/>
            <person name="Wang H."/>
            <person name="Wang S."/>
            <person name="Zhao G."/>
            <person name="Zhang Y."/>
        </authorList>
    </citation>
    <scope>NUCLEOTIDE SEQUENCE [LARGE SCALE GENOMIC DNA]</scope>
    <source>
        <strain>ATCC 25177 / H37Ra</strain>
    </source>
</reference>
<keyword id="KW-0328">Glycosyltransferase</keyword>
<keyword id="KW-0460">Magnesium</keyword>
<keyword id="KW-0479">Metal-binding</keyword>
<keyword id="KW-1185">Reference proteome</keyword>
<keyword id="KW-0808">Transferase</keyword>
<feature type="chain" id="PRO_0000400141" description="D-inositol 3-phosphate glycosyltransferase">
    <location>
        <begin position="1"/>
        <end position="480"/>
    </location>
</feature>
<feature type="region of interest" description="Disordered" evidence="3">
    <location>
        <begin position="1"/>
        <end position="42"/>
    </location>
</feature>
<feature type="binding site" evidence="2">
    <location>
        <position position="53"/>
    </location>
    <ligand>
        <name>1D-myo-inositol 3-phosphate</name>
        <dbReference type="ChEBI" id="CHEBI:58401"/>
    </ligand>
</feature>
<feature type="binding site" evidence="2">
    <location>
        <begin position="59"/>
        <end position="60"/>
    </location>
    <ligand>
        <name>UDP-N-acetyl-alpha-D-glucosamine</name>
        <dbReference type="ChEBI" id="CHEBI:57705"/>
    </ligand>
</feature>
<feature type="binding site" evidence="2">
    <location>
        <begin position="64"/>
        <end position="69"/>
    </location>
    <ligand>
        <name>1D-myo-inositol 3-phosphate</name>
        <dbReference type="ChEBI" id="CHEBI:58401"/>
    </ligand>
</feature>
<feature type="binding site" evidence="2">
    <location>
        <position position="67"/>
    </location>
    <ligand>
        <name>UDP-N-acetyl-alpha-D-glucosamine</name>
        <dbReference type="ChEBI" id="CHEBI:57705"/>
    </ligand>
</feature>
<feature type="binding site" evidence="2">
    <location>
        <position position="122"/>
    </location>
    <ligand>
        <name>1D-myo-inositol 3-phosphate</name>
        <dbReference type="ChEBI" id="CHEBI:58401"/>
    </ligand>
</feature>
<feature type="binding site" evidence="2">
    <location>
        <position position="155"/>
    </location>
    <ligand>
        <name>1D-myo-inositol 3-phosphate</name>
        <dbReference type="ChEBI" id="CHEBI:58401"/>
    </ligand>
</feature>
<feature type="binding site" evidence="2">
    <location>
        <position position="179"/>
    </location>
    <ligand>
        <name>1D-myo-inositol 3-phosphate</name>
        <dbReference type="ChEBI" id="CHEBI:58401"/>
    </ligand>
</feature>
<feature type="binding site" evidence="2">
    <location>
        <position position="199"/>
    </location>
    <ligand>
        <name>1D-myo-inositol 3-phosphate</name>
        <dbReference type="ChEBI" id="CHEBI:58401"/>
    </ligand>
</feature>
<feature type="binding site" evidence="2">
    <location>
        <position position="273"/>
    </location>
    <ligand>
        <name>UDP-N-acetyl-alpha-D-glucosamine</name>
        <dbReference type="ChEBI" id="CHEBI:57705"/>
    </ligand>
</feature>
<feature type="binding site" evidence="2">
    <location>
        <position position="278"/>
    </location>
    <ligand>
        <name>UDP-N-acetyl-alpha-D-glucosamine</name>
        <dbReference type="ChEBI" id="CHEBI:57705"/>
    </ligand>
</feature>
<feature type="binding site" evidence="2">
    <location>
        <position position="331"/>
    </location>
    <ligand>
        <name>UDP-N-acetyl-alpha-D-glucosamine</name>
        <dbReference type="ChEBI" id="CHEBI:57705"/>
    </ligand>
</feature>
<feature type="binding site" evidence="2">
    <location>
        <position position="340"/>
    </location>
    <ligand>
        <name>Mg(2+)</name>
        <dbReference type="ChEBI" id="CHEBI:18420"/>
    </ligand>
</feature>
<feature type="binding site" evidence="2">
    <location>
        <position position="341"/>
    </location>
    <ligand>
        <name>Mg(2+)</name>
        <dbReference type="ChEBI" id="CHEBI:18420"/>
    </ligand>
</feature>
<feature type="binding site" evidence="2">
    <location>
        <position position="343"/>
    </location>
    <ligand>
        <name>Mg(2+)</name>
        <dbReference type="ChEBI" id="CHEBI:18420"/>
    </ligand>
</feature>
<feature type="binding site" evidence="2">
    <location>
        <position position="353"/>
    </location>
    <ligand>
        <name>UDP-N-acetyl-alpha-D-glucosamine</name>
        <dbReference type="ChEBI" id="CHEBI:57705"/>
    </ligand>
</feature>
<feature type="binding site" evidence="2">
    <location>
        <position position="361"/>
    </location>
    <ligand>
        <name>UDP-N-acetyl-alpha-D-glucosamine</name>
        <dbReference type="ChEBI" id="CHEBI:57705"/>
    </ligand>
</feature>
<feature type="binding site" evidence="2">
    <location>
        <position position="367"/>
    </location>
    <ligand>
        <name>Mg(2+)</name>
        <dbReference type="ChEBI" id="CHEBI:18420"/>
    </ligand>
</feature>
<evidence type="ECO:0000250" key="1">
    <source>
        <dbReference type="UniProtKB" id="P9WMY7"/>
    </source>
</evidence>
<evidence type="ECO:0000255" key="2">
    <source>
        <dbReference type="HAMAP-Rule" id="MF_01695"/>
    </source>
</evidence>
<evidence type="ECO:0000256" key="3">
    <source>
        <dbReference type="SAM" id="MobiDB-lite"/>
    </source>
</evidence>
<evidence type="ECO:0000305" key="4">
    <source>
    </source>
</evidence>
<organism>
    <name type="scientific">Mycobacterium tuberculosis (strain ATCC 25177 / H37Ra)</name>
    <dbReference type="NCBI Taxonomy" id="419947"/>
    <lineage>
        <taxon>Bacteria</taxon>
        <taxon>Bacillati</taxon>
        <taxon>Actinomycetota</taxon>
        <taxon>Actinomycetes</taxon>
        <taxon>Mycobacteriales</taxon>
        <taxon>Mycobacteriaceae</taxon>
        <taxon>Mycobacterium</taxon>
        <taxon>Mycobacterium tuberculosis complex</taxon>
    </lineage>
</organism>